<organism>
    <name type="scientific">Herpetosiphon aurantiacus (strain ATCC 23779 / DSM 785 / 114-95)</name>
    <dbReference type="NCBI Taxonomy" id="316274"/>
    <lineage>
        <taxon>Bacteria</taxon>
        <taxon>Bacillati</taxon>
        <taxon>Chloroflexota</taxon>
        <taxon>Chloroflexia</taxon>
        <taxon>Herpetosiphonales</taxon>
        <taxon>Herpetosiphonaceae</taxon>
        <taxon>Herpetosiphon</taxon>
    </lineage>
</organism>
<feature type="chain" id="PRO_1000187600" description="Tyrosine recombinase XerC">
    <location>
        <begin position="1"/>
        <end position="306"/>
    </location>
</feature>
<feature type="domain" description="Core-binding (CB)" evidence="3">
    <location>
        <begin position="1"/>
        <end position="85"/>
    </location>
</feature>
<feature type="domain" description="Tyr recombinase" evidence="2">
    <location>
        <begin position="106"/>
        <end position="289"/>
    </location>
</feature>
<feature type="active site" evidence="1">
    <location>
        <position position="147"/>
    </location>
</feature>
<feature type="active site" evidence="1">
    <location>
        <position position="171"/>
    </location>
</feature>
<feature type="active site" evidence="1">
    <location>
        <position position="241"/>
    </location>
</feature>
<feature type="active site" evidence="1">
    <location>
        <position position="244"/>
    </location>
</feature>
<feature type="active site" evidence="1">
    <location>
        <position position="267"/>
    </location>
</feature>
<feature type="active site" description="O-(3'-phospho-DNA)-tyrosine intermediate" evidence="1">
    <location>
        <position position="276"/>
    </location>
</feature>
<keyword id="KW-0131">Cell cycle</keyword>
<keyword id="KW-0132">Cell division</keyword>
<keyword id="KW-0159">Chromosome partition</keyword>
<keyword id="KW-0963">Cytoplasm</keyword>
<keyword id="KW-0229">DNA integration</keyword>
<keyword id="KW-0233">DNA recombination</keyword>
<keyword id="KW-0238">DNA-binding</keyword>
<name>XERC_HERA2</name>
<protein>
    <recommendedName>
        <fullName evidence="1">Tyrosine recombinase XerC</fullName>
    </recommendedName>
</protein>
<reference key="1">
    <citation type="journal article" date="2011" name="Stand. Genomic Sci.">
        <title>Complete genome sequence of the filamentous gliding predatory bacterium Herpetosiphon aurantiacus type strain (114-95(T)).</title>
        <authorList>
            <person name="Kiss H."/>
            <person name="Nett M."/>
            <person name="Domin N."/>
            <person name="Martin K."/>
            <person name="Maresca J.A."/>
            <person name="Copeland A."/>
            <person name="Lapidus A."/>
            <person name="Lucas S."/>
            <person name="Berry K.W."/>
            <person name="Glavina Del Rio T."/>
            <person name="Dalin E."/>
            <person name="Tice H."/>
            <person name="Pitluck S."/>
            <person name="Richardson P."/>
            <person name="Bruce D."/>
            <person name="Goodwin L."/>
            <person name="Han C."/>
            <person name="Detter J.C."/>
            <person name="Schmutz J."/>
            <person name="Brettin T."/>
            <person name="Land M."/>
            <person name="Hauser L."/>
            <person name="Kyrpides N.C."/>
            <person name="Ivanova N."/>
            <person name="Goeker M."/>
            <person name="Woyke T."/>
            <person name="Klenk H.P."/>
            <person name="Bryant D.A."/>
        </authorList>
    </citation>
    <scope>NUCLEOTIDE SEQUENCE [LARGE SCALE GENOMIC DNA]</scope>
    <source>
        <strain>ATCC 23779 / DSM 785 / 114-95</strain>
    </source>
</reference>
<comment type="function">
    <text evidence="1">Site-specific tyrosine recombinase, which acts by catalyzing the cutting and rejoining of the recombining DNA molecules. The XerC-XerD complex is essential to convert dimers of the bacterial chromosome into monomers to permit their segregation at cell division. It also contributes to the segregational stability of plasmids.</text>
</comment>
<comment type="subunit">
    <text evidence="1">Forms a cyclic heterotetrameric complex composed of two molecules of XerC and two molecules of XerD.</text>
</comment>
<comment type="subcellular location">
    <subcellularLocation>
        <location evidence="1">Cytoplasm</location>
    </subcellularLocation>
</comment>
<comment type="similarity">
    <text evidence="1">Belongs to the 'phage' integrase family. XerC subfamily.</text>
</comment>
<dbReference type="EMBL" id="CP000875">
    <property type="protein sequence ID" value="ABX07327.1"/>
    <property type="molecule type" value="Genomic_DNA"/>
</dbReference>
<dbReference type="SMR" id="A9B1E0"/>
<dbReference type="FunCoup" id="A9B1E0">
    <property type="interactions" value="326"/>
</dbReference>
<dbReference type="STRING" id="316274.Haur_4696"/>
<dbReference type="KEGG" id="hau:Haur_4696"/>
<dbReference type="eggNOG" id="COG4974">
    <property type="taxonomic scope" value="Bacteria"/>
</dbReference>
<dbReference type="HOGENOM" id="CLU_027562_9_6_0"/>
<dbReference type="InParanoid" id="A9B1E0"/>
<dbReference type="Proteomes" id="UP000000787">
    <property type="component" value="Chromosome"/>
</dbReference>
<dbReference type="GO" id="GO:0005737">
    <property type="term" value="C:cytoplasm"/>
    <property type="evidence" value="ECO:0007669"/>
    <property type="project" value="UniProtKB-SubCell"/>
</dbReference>
<dbReference type="GO" id="GO:0003677">
    <property type="term" value="F:DNA binding"/>
    <property type="evidence" value="ECO:0007669"/>
    <property type="project" value="UniProtKB-KW"/>
</dbReference>
<dbReference type="GO" id="GO:0009037">
    <property type="term" value="F:tyrosine-based site-specific recombinase activity"/>
    <property type="evidence" value="ECO:0007669"/>
    <property type="project" value="UniProtKB-UniRule"/>
</dbReference>
<dbReference type="GO" id="GO:0051301">
    <property type="term" value="P:cell division"/>
    <property type="evidence" value="ECO:0007669"/>
    <property type="project" value="UniProtKB-KW"/>
</dbReference>
<dbReference type="GO" id="GO:0007059">
    <property type="term" value="P:chromosome segregation"/>
    <property type="evidence" value="ECO:0007669"/>
    <property type="project" value="UniProtKB-UniRule"/>
</dbReference>
<dbReference type="GO" id="GO:0006313">
    <property type="term" value="P:DNA transposition"/>
    <property type="evidence" value="ECO:0007669"/>
    <property type="project" value="UniProtKB-UniRule"/>
</dbReference>
<dbReference type="CDD" id="cd00798">
    <property type="entry name" value="INT_XerDC_C"/>
    <property type="match status" value="1"/>
</dbReference>
<dbReference type="Gene3D" id="1.10.150.130">
    <property type="match status" value="1"/>
</dbReference>
<dbReference type="Gene3D" id="1.10.443.10">
    <property type="entry name" value="Intergrase catalytic core"/>
    <property type="match status" value="1"/>
</dbReference>
<dbReference type="HAMAP" id="MF_01808">
    <property type="entry name" value="Recomb_XerC_XerD"/>
    <property type="match status" value="1"/>
</dbReference>
<dbReference type="InterPro" id="IPR044068">
    <property type="entry name" value="CB"/>
</dbReference>
<dbReference type="InterPro" id="IPR011010">
    <property type="entry name" value="DNA_brk_join_enz"/>
</dbReference>
<dbReference type="InterPro" id="IPR013762">
    <property type="entry name" value="Integrase-like_cat_sf"/>
</dbReference>
<dbReference type="InterPro" id="IPR002104">
    <property type="entry name" value="Integrase_catalytic"/>
</dbReference>
<dbReference type="InterPro" id="IPR010998">
    <property type="entry name" value="Integrase_recombinase_N"/>
</dbReference>
<dbReference type="InterPro" id="IPR004107">
    <property type="entry name" value="Integrase_SAM-like_N"/>
</dbReference>
<dbReference type="InterPro" id="IPR023009">
    <property type="entry name" value="Tyrosine_recombinase_XerC/XerD"/>
</dbReference>
<dbReference type="InterPro" id="IPR050090">
    <property type="entry name" value="Tyrosine_recombinase_XerCD"/>
</dbReference>
<dbReference type="NCBIfam" id="NF001399">
    <property type="entry name" value="PRK00283.1"/>
    <property type="match status" value="1"/>
</dbReference>
<dbReference type="NCBIfam" id="NF040815">
    <property type="entry name" value="recomb_XerA_Arch"/>
    <property type="match status" value="1"/>
</dbReference>
<dbReference type="PANTHER" id="PTHR30349">
    <property type="entry name" value="PHAGE INTEGRASE-RELATED"/>
    <property type="match status" value="1"/>
</dbReference>
<dbReference type="PANTHER" id="PTHR30349:SF81">
    <property type="entry name" value="TYROSINE RECOMBINASE XERC"/>
    <property type="match status" value="1"/>
</dbReference>
<dbReference type="Pfam" id="PF02899">
    <property type="entry name" value="Phage_int_SAM_1"/>
    <property type="match status" value="1"/>
</dbReference>
<dbReference type="Pfam" id="PF00589">
    <property type="entry name" value="Phage_integrase"/>
    <property type="match status" value="1"/>
</dbReference>
<dbReference type="SUPFAM" id="SSF56349">
    <property type="entry name" value="DNA breaking-rejoining enzymes"/>
    <property type="match status" value="1"/>
</dbReference>
<dbReference type="PROSITE" id="PS51900">
    <property type="entry name" value="CB"/>
    <property type="match status" value="1"/>
</dbReference>
<dbReference type="PROSITE" id="PS51898">
    <property type="entry name" value="TYR_RECOMBINASE"/>
    <property type="match status" value="1"/>
</dbReference>
<sequence length="306" mass="34204">MQQQLEQFLAYLTVERGLTGNTIAAYRTDLDQFVNFIVERNTGSWSNVSRDDLLAFLLFLKEKRYATSTIARRTAAIKSFFEYLQGQHSITTNPTENLDSPKVDRFLPKAITVAQVDELLELPLTTSGPEGLRDKAMLEVLYATGMRVSELVALDVGDVDLAIHQIRCLGKANKERNLPIVGSASTALEEYLDIARGQISRNGGDPALFLNHRGKRLTRQGFWLILKGYAERLGLSDLTPHTLRHSFATHMLNRGKDLREVQELLGHASISTTQIYTHVSNDRAVKYDQAAQRPTVANAAEVEFSA</sequence>
<evidence type="ECO:0000255" key="1">
    <source>
        <dbReference type="HAMAP-Rule" id="MF_01808"/>
    </source>
</evidence>
<evidence type="ECO:0000255" key="2">
    <source>
        <dbReference type="PROSITE-ProRule" id="PRU01246"/>
    </source>
</evidence>
<evidence type="ECO:0000255" key="3">
    <source>
        <dbReference type="PROSITE-ProRule" id="PRU01248"/>
    </source>
</evidence>
<proteinExistence type="inferred from homology"/>
<gene>
    <name evidence="1" type="primary">xerC</name>
    <name type="ordered locus">Haur_4696</name>
</gene>
<accession>A9B1E0</accession>